<organism>
    <name type="scientific">Polaromonas naphthalenivorans (strain CJ2)</name>
    <dbReference type="NCBI Taxonomy" id="365044"/>
    <lineage>
        <taxon>Bacteria</taxon>
        <taxon>Pseudomonadati</taxon>
        <taxon>Pseudomonadota</taxon>
        <taxon>Betaproteobacteria</taxon>
        <taxon>Burkholderiales</taxon>
        <taxon>Comamonadaceae</taxon>
        <taxon>Polaromonas</taxon>
    </lineage>
</organism>
<gene>
    <name evidence="1" type="primary">kdsA</name>
    <name type="ordered locus">Pnap_1184</name>
</gene>
<protein>
    <recommendedName>
        <fullName evidence="1">2-dehydro-3-deoxyphosphooctonate aldolase</fullName>
        <ecNumber evidence="1">2.5.1.55</ecNumber>
    </recommendedName>
    <alternativeName>
        <fullName evidence="1">3-deoxy-D-manno-octulosonic acid 8-phosphate synthase</fullName>
    </alternativeName>
    <alternativeName>
        <fullName evidence="1">KDO-8-phosphate synthase</fullName>
        <shortName evidence="1">KDO 8-P synthase</shortName>
        <shortName evidence="1">KDOPS</shortName>
    </alternativeName>
    <alternativeName>
        <fullName evidence="1">Phospho-2-dehydro-3-deoxyoctonate aldolase</fullName>
    </alternativeName>
</protein>
<evidence type="ECO:0000255" key="1">
    <source>
        <dbReference type="HAMAP-Rule" id="MF_00056"/>
    </source>
</evidence>
<keyword id="KW-0963">Cytoplasm</keyword>
<keyword id="KW-0448">Lipopolysaccharide biosynthesis</keyword>
<keyword id="KW-1185">Reference proteome</keyword>
<keyword id="KW-0808">Transferase</keyword>
<feature type="chain" id="PRO_0000304467" description="2-dehydro-3-deoxyphosphooctonate aldolase">
    <location>
        <begin position="1"/>
        <end position="285"/>
    </location>
</feature>
<reference key="1">
    <citation type="journal article" date="2009" name="Environ. Microbiol.">
        <title>The genome of Polaromonas naphthalenivorans strain CJ2, isolated from coal tar-contaminated sediment, reveals physiological and metabolic versatility and evolution through extensive horizontal gene transfer.</title>
        <authorList>
            <person name="Yagi J.M."/>
            <person name="Sims D."/>
            <person name="Brettin T."/>
            <person name="Bruce D."/>
            <person name="Madsen E.L."/>
        </authorList>
    </citation>
    <scope>NUCLEOTIDE SEQUENCE [LARGE SCALE GENOMIC DNA]</scope>
    <source>
        <strain>CJ2</strain>
    </source>
</reference>
<accession>A1VLH2</accession>
<proteinExistence type="inferred from homology"/>
<dbReference type="EC" id="2.5.1.55" evidence="1"/>
<dbReference type="EMBL" id="CP000529">
    <property type="protein sequence ID" value="ABM36500.1"/>
    <property type="molecule type" value="Genomic_DNA"/>
</dbReference>
<dbReference type="RefSeq" id="WP_011800593.1">
    <property type="nucleotide sequence ID" value="NC_008781.1"/>
</dbReference>
<dbReference type="SMR" id="A1VLH2"/>
<dbReference type="STRING" id="365044.Pnap_1184"/>
<dbReference type="KEGG" id="pna:Pnap_1184"/>
<dbReference type="eggNOG" id="COG2877">
    <property type="taxonomic scope" value="Bacteria"/>
</dbReference>
<dbReference type="HOGENOM" id="CLU_036666_0_0_4"/>
<dbReference type="OrthoDB" id="9776934at2"/>
<dbReference type="UniPathway" id="UPA00030"/>
<dbReference type="UniPathway" id="UPA00357">
    <property type="reaction ID" value="UER00474"/>
</dbReference>
<dbReference type="Proteomes" id="UP000000644">
    <property type="component" value="Chromosome"/>
</dbReference>
<dbReference type="GO" id="GO:0005737">
    <property type="term" value="C:cytoplasm"/>
    <property type="evidence" value="ECO:0007669"/>
    <property type="project" value="UniProtKB-SubCell"/>
</dbReference>
<dbReference type="GO" id="GO:0008676">
    <property type="term" value="F:3-deoxy-8-phosphooctulonate synthase activity"/>
    <property type="evidence" value="ECO:0007669"/>
    <property type="project" value="UniProtKB-UniRule"/>
</dbReference>
<dbReference type="GO" id="GO:0019294">
    <property type="term" value="P:keto-3-deoxy-D-manno-octulosonic acid biosynthetic process"/>
    <property type="evidence" value="ECO:0007669"/>
    <property type="project" value="UniProtKB-UniRule"/>
</dbReference>
<dbReference type="Gene3D" id="3.20.20.70">
    <property type="entry name" value="Aldolase class I"/>
    <property type="match status" value="1"/>
</dbReference>
<dbReference type="HAMAP" id="MF_00056">
    <property type="entry name" value="KDO8P_synth"/>
    <property type="match status" value="1"/>
</dbReference>
<dbReference type="InterPro" id="IPR013785">
    <property type="entry name" value="Aldolase_TIM"/>
</dbReference>
<dbReference type="InterPro" id="IPR006218">
    <property type="entry name" value="DAHP1/KDSA"/>
</dbReference>
<dbReference type="InterPro" id="IPR006269">
    <property type="entry name" value="KDO8P_synthase"/>
</dbReference>
<dbReference type="NCBIfam" id="TIGR01362">
    <property type="entry name" value="KDO8P_synth"/>
    <property type="match status" value="1"/>
</dbReference>
<dbReference type="NCBIfam" id="NF003543">
    <property type="entry name" value="PRK05198.1"/>
    <property type="match status" value="1"/>
</dbReference>
<dbReference type="PANTHER" id="PTHR21057">
    <property type="entry name" value="PHOSPHO-2-DEHYDRO-3-DEOXYHEPTONATE ALDOLASE"/>
    <property type="match status" value="1"/>
</dbReference>
<dbReference type="Pfam" id="PF00793">
    <property type="entry name" value="DAHP_synth_1"/>
    <property type="match status" value="1"/>
</dbReference>
<dbReference type="SUPFAM" id="SSF51569">
    <property type="entry name" value="Aldolase"/>
    <property type="match status" value="1"/>
</dbReference>
<sequence>MKLCGFDIGLDQPFFLIAGPCVVESEQLQMDTAGTLKEITASLGIPFIFKSSYDKANRSSGTSFRGPGMEKGLQILAKVKRELGLPILTDVHSEAEITAVAAVVDVLQTPAFLCRQTDFIHAVAQSGRPVNIKKGQFLAPGDMKNVIDKARAAAREKGLDEDRFMACERGASFGYNNLVSDMRSLAIMRETRAPVVFDATHSVQLPGGMGTSSGGQREMVPVLARAAVAVGIAGLFMETHPDPANAMSDGPNAVPLKHMKALLETLLELDRVTKKNGYLENSFSA</sequence>
<comment type="catalytic activity">
    <reaction evidence="1">
        <text>D-arabinose 5-phosphate + phosphoenolpyruvate + H2O = 3-deoxy-alpha-D-manno-2-octulosonate-8-phosphate + phosphate</text>
        <dbReference type="Rhea" id="RHEA:14053"/>
        <dbReference type="ChEBI" id="CHEBI:15377"/>
        <dbReference type="ChEBI" id="CHEBI:43474"/>
        <dbReference type="ChEBI" id="CHEBI:57693"/>
        <dbReference type="ChEBI" id="CHEBI:58702"/>
        <dbReference type="ChEBI" id="CHEBI:85985"/>
        <dbReference type="EC" id="2.5.1.55"/>
    </reaction>
</comment>
<comment type="pathway">
    <text evidence="1">Carbohydrate biosynthesis; 3-deoxy-D-manno-octulosonate biosynthesis; 3-deoxy-D-manno-octulosonate from D-ribulose 5-phosphate: step 2/3.</text>
</comment>
<comment type="pathway">
    <text evidence="1">Bacterial outer membrane biogenesis; lipopolysaccharide biosynthesis.</text>
</comment>
<comment type="subcellular location">
    <subcellularLocation>
        <location evidence="1">Cytoplasm</location>
    </subcellularLocation>
</comment>
<comment type="similarity">
    <text evidence="1">Belongs to the KdsA family.</text>
</comment>
<name>KDSA_POLNA</name>